<geneLocation type="mitochondrion"/>
<name>CYB_MUSEV</name>
<evidence type="ECO:0000250" key="1"/>
<evidence type="ECO:0000250" key="2">
    <source>
        <dbReference type="UniProtKB" id="P00157"/>
    </source>
</evidence>
<evidence type="ECO:0000255" key="3">
    <source>
        <dbReference type="PROSITE-ProRule" id="PRU00967"/>
    </source>
</evidence>
<evidence type="ECO:0000255" key="4">
    <source>
        <dbReference type="PROSITE-ProRule" id="PRU00968"/>
    </source>
</evidence>
<keyword id="KW-0249">Electron transport</keyword>
<keyword id="KW-0349">Heme</keyword>
<keyword id="KW-0408">Iron</keyword>
<keyword id="KW-0472">Membrane</keyword>
<keyword id="KW-0479">Metal-binding</keyword>
<keyword id="KW-0496">Mitochondrion</keyword>
<keyword id="KW-0999">Mitochondrion inner membrane</keyword>
<keyword id="KW-0679">Respiratory chain</keyword>
<keyword id="KW-0812">Transmembrane</keyword>
<keyword id="KW-1133">Transmembrane helix</keyword>
<keyword id="KW-0813">Transport</keyword>
<keyword id="KW-0830">Ubiquinone</keyword>
<organism>
    <name type="scientific">Mustela eversmannii</name>
    <name type="common">Steppe polecat</name>
    <dbReference type="NCBI Taxonomy" id="77149"/>
    <lineage>
        <taxon>Eukaryota</taxon>
        <taxon>Metazoa</taxon>
        <taxon>Chordata</taxon>
        <taxon>Craniata</taxon>
        <taxon>Vertebrata</taxon>
        <taxon>Euteleostomi</taxon>
        <taxon>Mammalia</taxon>
        <taxon>Eutheria</taxon>
        <taxon>Laurasiatheria</taxon>
        <taxon>Carnivora</taxon>
        <taxon>Caniformia</taxon>
        <taxon>Musteloidea</taxon>
        <taxon>Mustelidae</taxon>
        <taxon>Mustelinae</taxon>
        <taxon>Mustela</taxon>
    </lineage>
</organism>
<feature type="chain" id="PRO_0000247332" description="Cytochrome b">
    <location>
        <begin position="1"/>
        <end position="379"/>
    </location>
</feature>
<feature type="transmembrane region" description="Helical" evidence="2">
    <location>
        <begin position="33"/>
        <end position="53"/>
    </location>
</feature>
<feature type="transmembrane region" description="Helical" evidence="2">
    <location>
        <begin position="77"/>
        <end position="98"/>
    </location>
</feature>
<feature type="transmembrane region" description="Helical" evidence="2">
    <location>
        <begin position="113"/>
        <end position="133"/>
    </location>
</feature>
<feature type="transmembrane region" description="Helical" evidence="2">
    <location>
        <begin position="178"/>
        <end position="198"/>
    </location>
</feature>
<feature type="transmembrane region" description="Helical" evidence="2">
    <location>
        <begin position="226"/>
        <end position="246"/>
    </location>
</feature>
<feature type="transmembrane region" description="Helical" evidence="2">
    <location>
        <begin position="288"/>
        <end position="308"/>
    </location>
</feature>
<feature type="transmembrane region" description="Helical" evidence="2">
    <location>
        <begin position="320"/>
        <end position="340"/>
    </location>
</feature>
<feature type="transmembrane region" description="Helical" evidence="2">
    <location>
        <begin position="347"/>
        <end position="367"/>
    </location>
</feature>
<feature type="binding site" description="axial binding residue" evidence="2">
    <location>
        <position position="83"/>
    </location>
    <ligand>
        <name>heme b</name>
        <dbReference type="ChEBI" id="CHEBI:60344"/>
        <label>b562</label>
    </ligand>
    <ligandPart>
        <name>Fe</name>
        <dbReference type="ChEBI" id="CHEBI:18248"/>
    </ligandPart>
</feature>
<feature type="binding site" description="axial binding residue" evidence="2">
    <location>
        <position position="97"/>
    </location>
    <ligand>
        <name>heme b</name>
        <dbReference type="ChEBI" id="CHEBI:60344"/>
        <label>b566</label>
    </ligand>
    <ligandPart>
        <name>Fe</name>
        <dbReference type="ChEBI" id="CHEBI:18248"/>
    </ligandPart>
</feature>
<feature type="binding site" description="axial binding residue" evidence="2">
    <location>
        <position position="182"/>
    </location>
    <ligand>
        <name>heme b</name>
        <dbReference type="ChEBI" id="CHEBI:60344"/>
        <label>b562</label>
    </ligand>
    <ligandPart>
        <name>Fe</name>
        <dbReference type="ChEBI" id="CHEBI:18248"/>
    </ligandPart>
</feature>
<feature type="binding site" description="axial binding residue" evidence="2">
    <location>
        <position position="196"/>
    </location>
    <ligand>
        <name>heme b</name>
        <dbReference type="ChEBI" id="CHEBI:60344"/>
        <label>b566</label>
    </ligand>
    <ligandPart>
        <name>Fe</name>
        <dbReference type="ChEBI" id="CHEBI:18248"/>
    </ligandPart>
</feature>
<feature type="binding site" evidence="2">
    <location>
        <position position="201"/>
    </location>
    <ligand>
        <name>a ubiquinone</name>
        <dbReference type="ChEBI" id="CHEBI:16389"/>
    </ligand>
</feature>
<comment type="function">
    <text evidence="2">Component of the ubiquinol-cytochrome c reductase complex (complex III or cytochrome b-c1 complex) that is part of the mitochondrial respiratory chain. The b-c1 complex mediates electron transfer from ubiquinol to cytochrome c. Contributes to the generation of a proton gradient across the mitochondrial membrane that is then used for ATP synthesis.</text>
</comment>
<comment type="cofactor">
    <cofactor evidence="2">
        <name>heme b</name>
        <dbReference type="ChEBI" id="CHEBI:60344"/>
    </cofactor>
    <text evidence="2">Binds 2 heme b groups non-covalently.</text>
</comment>
<comment type="subunit">
    <text evidence="2">The cytochrome bc1 complex contains 11 subunits: 3 respiratory subunits (MT-CYB, CYC1 and UQCRFS1), 2 core proteins (UQCRC1 and UQCRC2) and 6 low-molecular weight proteins (UQCRH/QCR6, UQCRB/QCR7, UQCRQ/QCR8, UQCR10/QCR9, UQCR11/QCR10 and a cleavage product of UQCRFS1). This cytochrome bc1 complex then forms a dimer.</text>
</comment>
<comment type="subcellular location">
    <subcellularLocation>
        <location evidence="2">Mitochondrion inner membrane</location>
        <topology evidence="2">Multi-pass membrane protein</topology>
    </subcellularLocation>
</comment>
<comment type="miscellaneous">
    <text evidence="1">Heme 1 (or BL or b562) is low-potential and absorbs at about 562 nm, and heme 2 (or BH or b566) is high-potential and absorbs at about 566 nm.</text>
</comment>
<comment type="similarity">
    <text evidence="3 4">Belongs to the cytochrome b family.</text>
</comment>
<comment type="caution">
    <text evidence="2">The full-length protein contains only eight transmembrane helices, not nine as predicted by bioinformatics tools.</text>
</comment>
<dbReference type="EMBL" id="AB026102">
    <property type="protein sequence ID" value="BAB08026.1"/>
    <property type="molecule type" value="Genomic_DNA"/>
</dbReference>
<dbReference type="SMR" id="Q7JE02"/>
<dbReference type="GO" id="GO:0005743">
    <property type="term" value="C:mitochondrial inner membrane"/>
    <property type="evidence" value="ECO:0007669"/>
    <property type="project" value="UniProtKB-SubCell"/>
</dbReference>
<dbReference type="GO" id="GO:0045275">
    <property type="term" value="C:respiratory chain complex III"/>
    <property type="evidence" value="ECO:0007669"/>
    <property type="project" value="InterPro"/>
</dbReference>
<dbReference type="GO" id="GO:0046872">
    <property type="term" value="F:metal ion binding"/>
    <property type="evidence" value="ECO:0007669"/>
    <property type="project" value="UniProtKB-KW"/>
</dbReference>
<dbReference type="GO" id="GO:0008121">
    <property type="term" value="F:ubiquinol-cytochrome-c reductase activity"/>
    <property type="evidence" value="ECO:0007669"/>
    <property type="project" value="InterPro"/>
</dbReference>
<dbReference type="GO" id="GO:0006122">
    <property type="term" value="P:mitochondrial electron transport, ubiquinol to cytochrome c"/>
    <property type="evidence" value="ECO:0007669"/>
    <property type="project" value="TreeGrafter"/>
</dbReference>
<dbReference type="CDD" id="cd00290">
    <property type="entry name" value="cytochrome_b_C"/>
    <property type="match status" value="1"/>
</dbReference>
<dbReference type="CDD" id="cd00284">
    <property type="entry name" value="Cytochrome_b_N"/>
    <property type="match status" value="1"/>
</dbReference>
<dbReference type="FunFam" id="1.20.810.10:FF:000002">
    <property type="entry name" value="Cytochrome b"/>
    <property type="match status" value="1"/>
</dbReference>
<dbReference type="Gene3D" id="1.20.810.10">
    <property type="entry name" value="Cytochrome Bc1 Complex, Chain C"/>
    <property type="match status" value="1"/>
</dbReference>
<dbReference type="InterPro" id="IPR005798">
    <property type="entry name" value="Cyt_b/b6_C"/>
</dbReference>
<dbReference type="InterPro" id="IPR036150">
    <property type="entry name" value="Cyt_b/b6_C_sf"/>
</dbReference>
<dbReference type="InterPro" id="IPR005797">
    <property type="entry name" value="Cyt_b/b6_N"/>
</dbReference>
<dbReference type="InterPro" id="IPR027387">
    <property type="entry name" value="Cytb/b6-like_sf"/>
</dbReference>
<dbReference type="InterPro" id="IPR030689">
    <property type="entry name" value="Cytochrome_b"/>
</dbReference>
<dbReference type="InterPro" id="IPR048260">
    <property type="entry name" value="Cytochrome_b_C_euk/bac"/>
</dbReference>
<dbReference type="InterPro" id="IPR048259">
    <property type="entry name" value="Cytochrome_b_N_euk/bac"/>
</dbReference>
<dbReference type="InterPro" id="IPR016174">
    <property type="entry name" value="Di-haem_cyt_TM"/>
</dbReference>
<dbReference type="PANTHER" id="PTHR19271">
    <property type="entry name" value="CYTOCHROME B"/>
    <property type="match status" value="1"/>
</dbReference>
<dbReference type="PANTHER" id="PTHR19271:SF16">
    <property type="entry name" value="CYTOCHROME B"/>
    <property type="match status" value="1"/>
</dbReference>
<dbReference type="Pfam" id="PF00032">
    <property type="entry name" value="Cytochrom_B_C"/>
    <property type="match status" value="1"/>
</dbReference>
<dbReference type="Pfam" id="PF00033">
    <property type="entry name" value="Cytochrome_B"/>
    <property type="match status" value="1"/>
</dbReference>
<dbReference type="PIRSF" id="PIRSF038885">
    <property type="entry name" value="COB"/>
    <property type="match status" value="1"/>
</dbReference>
<dbReference type="SUPFAM" id="SSF81648">
    <property type="entry name" value="a domain/subunit of cytochrome bc1 complex (Ubiquinol-cytochrome c reductase)"/>
    <property type="match status" value="1"/>
</dbReference>
<dbReference type="SUPFAM" id="SSF81342">
    <property type="entry name" value="Transmembrane di-heme cytochromes"/>
    <property type="match status" value="1"/>
</dbReference>
<dbReference type="PROSITE" id="PS51003">
    <property type="entry name" value="CYTB_CTER"/>
    <property type="match status" value="1"/>
</dbReference>
<dbReference type="PROSITE" id="PS51002">
    <property type="entry name" value="CYTB_NTER"/>
    <property type="match status" value="1"/>
</dbReference>
<accession>Q7JE02</accession>
<gene>
    <name type="primary">MT-CYB</name>
    <name type="synonym">COB</name>
    <name type="synonym">CYTB</name>
    <name type="synonym">MTCYB</name>
</gene>
<reference key="1">
    <citation type="journal article" date="2000" name="Zool. Sci.">
        <title>Intrageneric diversity of the cytochrome b gene and phylogeny of Eurasian species of the genus mustela (Mustelidae, Carnivora).</title>
        <authorList>
            <person name="Kurose N."/>
            <person name="Abramov A.V."/>
            <person name="Masuda R."/>
        </authorList>
    </citation>
    <scope>NUCLEOTIDE SEQUENCE [GENOMIC DNA]</scope>
    <source>
        <strain>Isolate MEV-RURA1</strain>
    </source>
</reference>
<protein>
    <recommendedName>
        <fullName>Cytochrome b</fullName>
    </recommendedName>
    <alternativeName>
        <fullName>Complex III subunit 3</fullName>
    </alternativeName>
    <alternativeName>
        <fullName>Complex III subunit III</fullName>
    </alternativeName>
    <alternativeName>
        <fullName>Cytochrome b-c1 complex subunit 3</fullName>
    </alternativeName>
    <alternativeName>
        <fullName>Ubiquinol-cytochrome-c reductase complex cytochrome b subunit</fullName>
    </alternativeName>
</protein>
<proteinExistence type="inferred from homology"/>
<sequence>MTNIRKTHPLTKIINNSFIDLPAPSNISAWWNFGSLLGICLIIQILTGLFLAMHYTSDTATAFSSVTHICRDVNYGWIIRYMHANGASMFFICLFLHVGRGLYYGSYMFTETWNIGIILLFAVMATAFMGYVLPWGQMSFWGATVITNLLSAIPYIGTNLVEWIWGGFSVDKATLTRFFAFHFILPFIISALAAVHLLFLHETGSNNPSGIPSDSDKIPFHPYYTIKDILGALLLILMLTLLVLFSPDLLGDPDNYIPANPLNTPPHIKPEWYFLFAYAILRSIPNKLGGVLALIFSILILAIIPLLHTSKQRSMMFRPLSQCLFWLLVADLLTLTWIGGQPVEHPFIIIGQLASILYFMILLVLMPIISIIENNMLKW</sequence>